<sequence length="190" mass="22491">MILMKYSAILLICSVNLFCFQNKLTTSRWEFPKEDLIKKKIKIGIIYHNYINSIFYNENYKYIAFIGILTSYNEWIEIQFSPINFFTIPTNKDFISNTYFNLAFTIYITKYSILTDTLAIKFFIGTQIDLTLRTTIFTGKTTHAFLYPILPIITFKFEIDFIPNNYSIYYKLSTSFKEFILLDLGISIFI</sequence>
<reference key="1">
    <citation type="journal article" date="1997" name="Nature">
        <title>Genomic sequence of a Lyme disease spirochaete, Borrelia burgdorferi.</title>
        <authorList>
            <person name="Fraser C.M."/>
            <person name="Casjens S."/>
            <person name="Huang W.M."/>
            <person name="Sutton G.G."/>
            <person name="Clayton R.A."/>
            <person name="Lathigra R."/>
            <person name="White O."/>
            <person name="Ketchum K.A."/>
            <person name="Dodson R.J."/>
            <person name="Hickey E.K."/>
            <person name="Gwinn M.L."/>
            <person name="Dougherty B.A."/>
            <person name="Tomb J.-F."/>
            <person name="Fleischmann R.D."/>
            <person name="Richardson D.L."/>
            <person name="Peterson J.D."/>
            <person name="Kerlavage A.R."/>
            <person name="Quackenbush J."/>
            <person name="Salzberg S.L."/>
            <person name="Hanson M."/>
            <person name="van Vugt R."/>
            <person name="Palmer N."/>
            <person name="Adams M.D."/>
            <person name="Gocayne J.D."/>
            <person name="Weidman J.F."/>
            <person name="Utterback T.R."/>
            <person name="Watthey L."/>
            <person name="McDonald L.A."/>
            <person name="Artiach P."/>
            <person name="Bowman C."/>
            <person name="Garland S.A."/>
            <person name="Fujii C."/>
            <person name="Cotton M.D."/>
            <person name="Horst K."/>
            <person name="Roberts K.M."/>
            <person name="Hatch B."/>
            <person name="Smith H.O."/>
            <person name="Venter J.C."/>
        </authorList>
    </citation>
    <scope>NUCLEOTIDE SEQUENCE [LARGE SCALE GENOMIC DNA]</scope>
    <source>
        <strain>ATCC 35210 / DSM 4680 / CIP 102532 / B31</strain>
    </source>
</reference>
<reference key="2">
    <citation type="journal article" date="1997" name="Mol. Microbiol.">
        <title>Telomeres of the linear chromosomes of Lyme disease spirochaetes: nucleotide sequence and possible exchange with linear plasmid telomeres.</title>
        <authorList>
            <person name="Casjens S."/>
            <person name="Murphy M."/>
            <person name="DeLange M."/>
            <person name="Sampson L."/>
            <person name="van Vugt R."/>
            <person name="Huang W.M."/>
        </authorList>
    </citation>
    <scope>NUCLEOTIDE SEQUENCE [GENOMIC DNA]</scope>
    <source>
        <strain>Sh-2-82</strain>
    </source>
</reference>
<name>Y001_BORBU</name>
<accession>O51035</accession>
<accession>O51894</accession>
<dbReference type="EMBL" id="AE000783">
    <property type="protein sequence ID" value="AAC66406.1"/>
    <property type="molecule type" value="Genomic_DNA"/>
</dbReference>
<dbReference type="EMBL" id="AF008218">
    <property type="protein sequence ID" value="AAB93996.1"/>
    <property type="molecule type" value="Genomic_DNA"/>
</dbReference>
<dbReference type="PIR" id="A70100">
    <property type="entry name" value="A70100"/>
</dbReference>
<dbReference type="RefSeq" id="NP_212135.1">
    <property type="nucleotide sequence ID" value="NC_001318.1"/>
</dbReference>
<dbReference type="RefSeq" id="WP_002658391.1">
    <property type="nucleotide sequence ID" value="NC_001318.1"/>
</dbReference>
<dbReference type="STRING" id="224326.BB_0001"/>
<dbReference type="PaxDb" id="224326-BB_0001"/>
<dbReference type="EnsemblBacteria" id="AAC66406">
    <property type="protein sequence ID" value="AAC66406"/>
    <property type="gene ID" value="BB_0001"/>
</dbReference>
<dbReference type="KEGG" id="bbu:BB_0001"/>
<dbReference type="PATRIC" id="fig|224326.49.peg.398"/>
<dbReference type="HOGENOM" id="CLU_121798_0_0_12"/>
<dbReference type="OrthoDB" id="352063at2"/>
<dbReference type="Proteomes" id="UP000001807">
    <property type="component" value="Chromosome"/>
</dbReference>
<feature type="chain" id="PRO_0000174361" description="Uncharacterized protein BB_0001">
    <location>
        <begin position="1"/>
        <end position="190"/>
    </location>
</feature>
<feature type="sequence conflict" description="In Ref. 2; AAB93996." evidence="1" ref="2">
    <original>I</original>
    <variation>M</variation>
    <location>
        <position position="12"/>
    </location>
</feature>
<feature type="sequence conflict" description="In Ref. 2; AAB93996." evidence="1" ref="2">
    <original>EDL</original>
    <variation>GDI</variation>
    <location>
        <begin position="34"/>
        <end position="36"/>
    </location>
</feature>
<feature type="sequence conflict" description="In Ref. 2; AAB93996." evidence="1" ref="2">
    <original>KI</original>
    <variation>NL</variation>
    <location>
        <begin position="40"/>
        <end position="41"/>
    </location>
</feature>
<feature type="sequence conflict" description="In Ref. 2; AAB93996." evidence="1" ref="2">
    <original>S</original>
    <variation>P</variation>
    <location>
        <position position="53"/>
    </location>
</feature>
<feature type="sequence conflict" description="In Ref. 2; AAB93996." evidence="1" ref="2">
    <original>S</original>
    <variation>I</variation>
    <location>
        <position position="81"/>
    </location>
</feature>
<evidence type="ECO:0000305" key="1"/>
<gene>
    <name type="ordered locus">BB_0001</name>
</gene>
<proteinExistence type="predicted"/>
<organism>
    <name type="scientific">Borreliella burgdorferi (strain ATCC 35210 / DSM 4680 / CIP 102532 / B31)</name>
    <name type="common">Borrelia burgdorferi</name>
    <dbReference type="NCBI Taxonomy" id="224326"/>
    <lineage>
        <taxon>Bacteria</taxon>
        <taxon>Pseudomonadati</taxon>
        <taxon>Spirochaetota</taxon>
        <taxon>Spirochaetia</taxon>
        <taxon>Spirochaetales</taxon>
        <taxon>Borreliaceae</taxon>
        <taxon>Borreliella</taxon>
    </lineage>
</organism>
<protein>
    <recommendedName>
        <fullName>Uncharacterized protein BB_0001</fullName>
    </recommendedName>
</protein>
<keyword id="KW-1185">Reference proteome</keyword>